<name>ATPF_CUPNH</name>
<sequence length="156" mass="17287">MNLNATFFAQMVVFFILWWVVAKFIWPPLVKALDERAKKIADGLAAAEKGKAELELANKRVDQAMAEARTEGAQRVADAEKRAQLTADEIKQNAQAEAARIIAQAKAEAEQQVTRAREALRDQVAVLAVKGAEQILKREVNAQVHTDLLNQLKAEL</sequence>
<comment type="function">
    <text evidence="1">F(1)F(0) ATP synthase produces ATP from ADP in the presence of a proton or sodium gradient. F-type ATPases consist of two structural domains, F(1) containing the extramembraneous catalytic core and F(0) containing the membrane proton channel, linked together by a central stalk and a peripheral stalk. During catalysis, ATP synthesis in the catalytic domain of F(1) is coupled via a rotary mechanism of the central stalk subunits to proton translocation.</text>
</comment>
<comment type="function">
    <text evidence="1">Component of the F(0) channel, it forms part of the peripheral stalk, linking F(1) to F(0).</text>
</comment>
<comment type="subunit">
    <text evidence="1">F-type ATPases have 2 components, F(1) - the catalytic core - and F(0) - the membrane proton channel. F(1) has five subunits: alpha(3), beta(3), gamma(1), delta(1), epsilon(1). F(0) has three main subunits: a(1), b(2) and c(10-14). The alpha and beta chains form an alternating ring which encloses part of the gamma chain. F(1) is attached to F(0) by a central stalk formed by the gamma and epsilon chains, while a peripheral stalk is formed by the delta and b chains.</text>
</comment>
<comment type="subcellular location">
    <subcellularLocation>
        <location evidence="1">Cell inner membrane</location>
        <topology evidence="1">Single-pass membrane protein</topology>
    </subcellularLocation>
</comment>
<comment type="similarity">
    <text evidence="1">Belongs to the ATPase B chain family.</text>
</comment>
<evidence type="ECO:0000255" key="1">
    <source>
        <dbReference type="HAMAP-Rule" id="MF_01398"/>
    </source>
</evidence>
<reference key="1">
    <citation type="journal article" date="2006" name="Nat. Biotechnol.">
        <title>Genome sequence of the bioplastic-producing 'Knallgas' bacterium Ralstonia eutropha H16.</title>
        <authorList>
            <person name="Pohlmann A."/>
            <person name="Fricke W.F."/>
            <person name="Reinecke F."/>
            <person name="Kusian B."/>
            <person name="Liesegang H."/>
            <person name="Cramm R."/>
            <person name="Eitinger T."/>
            <person name="Ewering C."/>
            <person name="Poetter M."/>
            <person name="Schwartz E."/>
            <person name="Strittmatter A."/>
            <person name="Voss I."/>
            <person name="Gottschalk G."/>
            <person name="Steinbuechel A."/>
            <person name="Friedrich B."/>
            <person name="Bowien B."/>
        </authorList>
    </citation>
    <scope>NUCLEOTIDE SEQUENCE [LARGE SCALE GENOMIC DNA]</scope>
    <source>
        <strain>ATCC 17699 / DSM 428 / KCTC 22496 / NCIMB 10442 / H16 / Stanier 337</strain>
    </source>
</reference>
<keyword id="KW-0066">ATP synthesis</keyword>
<keyword id="KW-0997">Cell inner membrane</keyword>
<keyword id="KW-1003">Cell membrane</keyword>
<keyword id="KW-0138">CF(0)</keyword>
<keyword id="KW-0375">Hydrogen ion transport</keyword>
<keyword id="KW-0406">Ion transport</keyword>
<keyword id="KW-0472">Membrane</keyword>
<keyword id="KW-1185">Reference proteome</keyword>
<keyword id="KW-0812">Transmembrane</keyword>
<keyword id="KW-1133">Transmembrane helix</keyword>
<keyword id="KW-0813">Transport</keyword>
<dbReference type="EMBL" id="AM260479">
    <property type="protein sequence ID" value="CAJ94698.1"/>
    <property type="molecule type" value="Genomic_DNA"/>
</dbReference>
<dbReference type="RefSeq" id="WP_010811267.1">
    <property type="nucleotide sequence ID" value="NZ_CP039287.1"/>
</dbReference>
<dbReference type="SMR" id="Q0K5M3"/>
<dbReference type="STRING" id="381666.H16_A3641"/>
<dbReference type="KEGG" id="reh:H16_A3641"/>
<dbReference type="eggNOG" id="COG0711">
    <property type="taxonomic scope" value="Bacteria"/>
</dbReference>
<dbReference type="HOGENOM" id="CLU_079215_4_5_4"/>
<dbReference type="OrthoDB" id="9788020at2"/>
<dbReference type="Proteomes" id="UP000008210">
    <property type="component" value="Chromosome 1"/>
</dbReference>
<dbReference type="GO" id="GO:0005886">
    <property type="term" value="C:plasma membrane"/>
    <property type="evidence" value="ECO:0007669"/>
    <property type="project" value="UniProtKB-SubCell"/>
</dbReference>
<dbReference type="GO" id="GO:0045259">
    <property type="term" value="C:proton-transporting ATP synthase complex"/>
    <property type="evidence" value="ECO:0007669"/>
    <property type="project" value="UniProtKB-KW"/>
</dbReference>
<dbReference type="GO" id="GO:0046933">
    <property type="term" value="F:proton-transporting ATP synthase activity, rotational mechanism"/>
    <property type="evidence" value="ECO:0007669"/>
    <property type="project" value="UniProtKB-UniRule"/>
</dbReference>
<dbReference type="GO" id="GO:0046961">
    <property type="term" value="F:proton-transporting ATPase activity, rotational mechanism"/>
    <property type="evidence" value="ECO:0007669"/>
    <property type="project" value="TreeGrafter"/>
</dbReference>
<dbReference type="CDD" id="cd06503">
    <property type="entry name" value="ATP-synt_Fo_b"/>
    <property type="match status" value="1"/>
</dbReference>
<dbReference type="Gene3D" id="6.10.250.1580">
    <property type="match status" value="1"/>
</dbReference>
<dbReference type="HAMAP" id="MF_01398">
    <property type="entry name" value="ATP_synth_b_bprime"/>
    <property type="match status" value="1"/>
</dbReference>
<dbReference type="InterPro" id="IPR028987">
    <property type="entry name" value="ATP_synth_B-like_membr_sf"/>
</dbReference>
<dbReference type="InterPro" id="IPR002146">
    <property type="entry name" value="ATP_synth_b/b'su_bac/chlpt"/>
</dbReference>
<dbReference type="InterPro" id="IPR005864">
    <property type="entry name" value="ATP_synth_F0_bsu_bac"/>
</dbReference>
<dbReference type="InterPro" id="IPR050059">
    <property type="entry name" value="ATP_synthase_B_chain"/>
</dbReference>
<dbReference type="NCBIfam" id="TIGR01144">
    <property type="entry name" value="ATP_synt_b"/>
    <property type="match status" value="1"/>
</dbReference>
<dbReference type="NCBIfam" id="NF004411">
    <property type="entry name" value="PRK05759.1-2"/>
    <property type="match status" value="1"/>
</dbReference>
<dbReference type="PANTHER" id="PTHR33445:SF1">
    <property type="entry name" value="ATP SYNTHASE SUBUNIT B"/>
    <property type="match status" value="1"/>
</dbReference>
<dbReference type="PANTHER" id="PTHR33445">
    <property type="entry name" value="ATP SYNTHASE SUBUNIT B', CHLOROPLASTIC"/>
    <property type="match status" value="1"/>
</dbReference>
<dbReference type="Pfam" id="PF00430">
    <property type="entry name" value="ATP-synt_B"/>
    <property type="match status" value="1"/>
</dbReference>
<dbReference type="SUPFAM" id="SSF81573">
    <property type="entry name" value="F1F0 ATP synthase subunit B, membrane domain"/>
    <property type="match status" value="1"/>
</dbReference>
<organism>
    <name type="scientific">Cupriavidus necator (strain ATCC 17699 / DSM 428 / KCTC 22496 / NCIMB 10442 / H16 / Stanier 337)</name>
    <name type="common">Ralstonia eutropha</name>
    <dbReference type="NCBI Taxonomy" id="381666"/>
    <lineage>
        <taxon>Bacteria</taxon>
        <taxon>Pseudomonadati</taxon>
        <taxon>Pseudomonadota</taxon>
        <taxon>Betaproteobacteria</taxon>
        <taxon>Burkholderiales</taxon>
        <taxon>Burkholderiaceae</taxon>
        <taxon>Cupriavidus</taxon>
    </lineage>
</organism>
<feature type="chain" id="PRO_0000368701" description="ATP synthase subunit b">
    <location>
        <begin position="1"/>
        <end position="156"/>
    </location>
</feature>
<feature type="transmembrane region" description="Helical" evidence="1">
    <location>
        <begin position="7"/>
        <end position="27"/>
    </location>
</feature>
<accession>Q0K5M3</accession>
<proteinExistence type="inferred from homology"/>
<gene>
    <name evidence="1" type="primary">atpF</name>
    <name type="ordered locus">H16_A3641</name>
</gene>
<protein>
    <recommendedName>
        <fullName evidence="1">ATP synthase subunit b</fullName>
    </recommendedName>
    <alternativeName>
        <fullName evidence="1">ATP synthase F(0) sector subunit b</fullName>
    </alternativeName>
    <alternativeName>
        <fullName evidence="1">ATPase subunit I</fullName>
    </alternativeName>
    <alternativeName>
        <fullName evidence="1">F-type ATPase subunit b</fullName>
        <shortName evidence="1">F-ATPase subunit b</shortName>
    </alternativeName>
</protein>